<reference key="1">
    <citation type="journal article" date="2001" name="Lancet">
        <title>Whole genome sequencing of meticillin-resistant Staphylococcus aureus.</title>
        <authorList>
            <person name="Kuroda M."/>
            <person name="Ohta T."/>
            <person name="Uchiyama I."/>
            <person name="Baba T."/>
            <person name="Yuzawa H."/>
            <person name="Kobayashi I."/>
            <person name="Cui L."/>
            <person name="Oguchi A."/>
            <person name="Aoki K."/>
            <person name="Nagai Y."/>
            <person name="Lian J.-Q."/>
            <person name="Ito T."/>
            <person name="Kanamori M."/>
            <person name="Matsumaru H."/>
            <person name="Maruyama A."/>
            <person name="Murakami H."/>
            <person name="Hosoyama A."/>
            <person name="Mizutani-Ui Y."/>
            <person name="Takahashi N.K."/>
            <person name="Sawano T."/>
            <person name="Inoue R."/>
            <person name="Kaito C."/>
            <person name="Sekimizu K."/>
            <person name="Hirakawa H."/>
            <person name="Kuhara S."/>
            <person name="Goto S."/>
            <person name="Yabuzaki J."/>
            <person name="Kanehisa M."/>
            <person name="Yamashita A."/>
            <person name="Oshima K."/>
            <person name="Furuya K."/>
            <person name="Yoshino C."/>
            <person name="Shiba T."/>
            <person name="Hattori M."/>
            <person name="Ogasawara N."/>
            <person name="Hayashi H."/>
            <person name="Hiramatsu K."/>
        </authorList>
    </citation>
    <scope>NUCLEOTIDE SEQUENCE [LARGE SCALE GENOMIC DNA]</scope>
    <source>
        <strain>Mu50 / ATCC 700699</strain>
    </source>
</reference>
<accession>Q99WV0</accession>
<keyword id="KW-0961">Cell wall biogenesis/degradation</keyword>
<keyword id="KW-0378">Hydrolase</keyword>
<keyword id="KW-0479">Metal-binding</keyword>
<keyword id="KW-0482">Metalloprotease</keyword>
<keyword id="KW-0645">Protease</keyword>
<keyword id="KW-0964">Secreted</keyword>
<keyword id="KW-0732">Signal</keyword>
<keyword id="KW-0843">Virulence</keyword>
<keyword id="KW-0862">Zinc</keyword>
<keyword id="KW-0865">Zymogen</keyword>
<proteinExistence type="inferred from homology"/>
<feature type="signal peptide" evidence="1">
    <location>
        <begin position="1"/>
        <end position="25"/>
    </location>
</feature>
<feature type="chain" id="PRO_0000026821" description="Glycyl-glycine endopeptidase LytM">
    <location>
        <begin position="26"/>
        <end position="316"/>
    </location>
</feature>
<feature type="region of interest" description="Disordered" evidence="2">
    <location>
        <begin position="133"/>
        <end position="189"/>
    </location>
</feature>
<feature type="compositionally biased region" description="Polar residues" evidence="2">
    <location>
        <begin position="145"/>
        <end position="158"/>
    </location>
</feature>
<feature type="compositionally biased region" description="Polar residues" evidence="2">
    <location>
        <begin position="166"/>
        <end position="181"/>
    </location>
</feature>
<feature type="binding site" evidence="1">
    <location>
        <position position="117"/>
    </location>
    <ligand>
        <name>Zn(2+)</name>
        <dbReference type="ChEBI" id="CHEBI:29105"/>
    </ligand>
</feature>
<feature type="binding site" evidence="1">
    <location>
        <position position="210"/>
    </location>
    <ligand>
        <name>Zn(2+)</name>
        <dbReference type="ChEBI" id="CHEBI:29105"/>
    </ligand>
</feature>
<feature type="binding site" evidence="1">
    <location>
        <position position="214"/>
    </location>
    <ligand>
        <name>Zn(2+)</name>
        <dbReference type="ChEBI" id="CHEBI:29105"/>
    </ligand>
</feature>
<feature type="binding site" evidence="1">
    <location>
        <position position="293"/>
    </location>
    <ligand>
        <name>Zn(2+)</name>
        <dbReference type="ChEBI" id="CHEBI:29105"/>
    </ligand>
</feature>
<gene>
    <name type="primary">lytM</name>
    <name type="ordered locus">SAV0276</name>
</gene>
<organism>
    <name type="scientific">Staphylococcus aureus (strain Mu50 / ATCC 700699)</name>
    <dbReference type="NCBI Taxonomy" id="158878"/>
    <lineage>
        <taxon>Bacteria</taxon>
        <taxon>Bacillati</taxon>
        <taxon>Bacillota</taxon>
        <taxon>Bacilli</taxon>
        <taxon>Bacillales</taxon>
        <taxon>Staphylococcaceae</taxon>
        <taxon>Staphylococcus</taxon>
    </lineage>
</organism>
<name>LYTM_STAAM</name>
<protein>
    <recommendedName>
        <fullName>Glycyl-glycine endopeptidase LytM</fullName>
        <ecNumber>3.4.24.75</ecNumber>
    </recommendedName>
    <alternativeName>
        <fullName>Autolysin LytM</fullName>
    </alternativeName>
</protein>
<dbReference type="EC" id="3.4.24.75"/>
<dbReference type="EMBL" id="BA000017">
    <property type="protein sequence ID" value="BAB56438.1"/>
    <property type="molecule type" value="Genomic_DNA"/>
</dbReference>
<dbReference type="RefSeq" id="WP_000736784.1">
    <property type="nucleotide sequence ID" value="NC_002758.2"/>
</dbReference>
<dbReference type="SMR" id="Q99WV0"/>
<dbReference type="MEROPS" id="M23.013"/>
<dbReference type="DNASU" id="1120234"/>
<dbReference type="KEGG" id="sav:SAV0276"/>
<dbReference type="HOGENOM" id="CLU_073067_0_0_9"/>
<dbReference type="PhylomeDB" id="Q99WV0"/>
<dbReference type="Proteomes" id="UP000002481">
    <property type="component" value="Chromosome"/>
</dbReference>
<dbReference type="GO" id="GO:0005576">
    <property type="term" value="C:extracellular region"/>
    <property type="evidence" value="ECO:0007669"/>
    <property type="project" value="UniProtKB-SubCell"/>
</dbReference>
<dbReference type="GO" id="GO:0046872">
    <property type="term" value="F:metal ion binding"/>
    <property type="evidence" value="ECO:0007669"/>
    <property type="project" value="UniProtKB-KW"/>
</dbReference>
<dbReference type="GO" id="GO:0004222">
    <property type="term" value="F:metalloendopeptidase activity"/>
    <property type="evidence" value="ECO:0007669"/>
    <property type="project" value="TreeGrafter"/>
</dbReference>
<dbReference type="GO" id="GO:0071555">
    <property type="term" value="P:cell wall organization"/>
    <property type="evidence" value="ECO:0007669"/>
    <property type="project" value="UniProtKB-KW"/>
</dbReference>
<dbReference type="GO" id="GO:0006508">
    <property type="term" value="P:proteolysis"/>
    <property type="evidence" value="ECO:0007669"/>
    <property type="project" value="UniProtKB-KW"/>
</dbReference>
<dbReference type="CDD" id="cd12797">
    <property type="entry name" value="M23_peptidase"/>
    <property type="match status" value="1"/>
</dbReference>
<dbReference type="FunFam" id="2.70.70.10:FF:000027">
    <property type="entry name" value="Glycyl-glycine endopeptidase LytM"/>
    <property type="match status" value="1"/>
</dbReference>
<dbReference type="Gene3D" id="2.40.50.290">
    <property type="match status" value="1"/>
</dbReference>
<dbReference type="Gene3D" id="2.70.70.10">
    <property type="entry name" value="Glucose Permease (Domain IIA)"/>
    <property type="match status" value="1"/>
</dbReference>
<dbReference type="InterPro" id="IPR050570">
    <property type="entry name" value="Cell_wall_metabolism_enzyme"/>
</dbReference>
<dbReference type="InterPro" id="IPR011055">
    <property type="entry name" value="Dup_hybrid_motif"/>
</dbReference>
<dbReference type="InterPro" id="IPR016047">
    <property type="entry name" value="Peptidase_M23"/>
</dbReference>
<dbReference type="PANTHER" id="PTHR21666:SF270">
    <property type="entry name" value="MUREIN HYDROLASE ACTIVATOR ENVC"/>
    <property type="match status" value="1"/>
</dbReference>
<dbReference type="PANTHER" id="PTHR21666">
    <property type="entry name" value="PEPTIDASE-RELATED"/>
    <property type="match status" value="1"/>
</dbReference>
<dbReference type="Pfam" id="PF01551">
    <property type="entry name" value="Peptidase_M23"/>
    <property type="match status" value="1"/>
</dbReference>
<dbReference type="SUPFAM" id="SSF51261">
    <property type="entry name" value="Duplicated hybrid motif"/>
    <property type="match status" value="1"/>
</dbReference>
<evidence type="ECO:0000250" key="1"/>
<evidence type="ECO:0000256" key="2">
    <source>
        <dbReference type="SAM" id="MobiDB-lite"/>
    </source>
</evidence>
<evidence type="ECO:0000305" key="3"/>
<sequence>MKKLTAAAIATMGFATFTMAHQADAAETTNTQQAHTLMSTQSQDVSYGTYYTIDSNGDYHHTPDGNWNQAMFDNKEYSYTFVDAQGHTHYFYNCYPKNANANGSGQTYVNPATAGDNNDYTASQSQQHINQYGYQSNVGPDASYYSHSNNNQAYNSHDGNGKVNYPNGTSNQNGGSASKATASGHAKDASWLTSRKQLQPYGQYHGGGAHYGVDYAMPENSPVYSLTDGTVVQAGWSNYGGGNQVTIKEANSNNYQWYMHNNRLTVSAGDKVKAGDQIAYSGSTGNSTAPHVHFQRMSGGIGNQYAVDPTSYLQSR</sequence>
<comment type="function">
    <text evidence="1">Peptidoglycan hydrolase (autolysin) specifically acting on polyglycine interpeptide bridges of the cell wall peptidoglycan.</text>
</comment>
<comment type="catalytic activity">
    <reaction>
        <text>Hydrolysis of the -Gly-|-Gly- bond in the pentaglycine inter-peptide link joining staphylococcal cell wall peptidoglycans.</text>
        <dbReference type="EC" id="3.4.24.75"/>
    </reaction>
</comment>
<comment type="cofactor">
    <cofactor evidence="1">
        <name>Zn(2+)</name>
        <dbReference type="ChEBI" id="CHEBI:29105"/>
    </cofactor>
    <text evidence="1">Binds 1 zinc ion per subunit.</text>
</comment>
<comment type="subunit">
    <text evidence="1">Monomer.</text>
</comment>
<comment type="subcellular location">
    <subcellularLocation>
        <location evidence="1">Secreted</location>
    </subcellularLocation>
</comment>
<comment type="similarity">
    <text evidence="3">Belongs to the peptidase M23B family.</text>
</comment>